<keyword id="KW-0067">ATP-binding</keyword>
<keyword id="KW-0963">Cytoplasm</keyword>
<keyword id="KW-0235">DNA replication</keyword>
<keyword id="KW-0238">DNA-binding</keyword>
<keyword id="KW-0446">Lipid-binding</keyword>
<keyword id="KW-0547">Nucleotide-binding</keyword>
<keyword id="KW-1185">Reference proteome</keyword>
<organism>
    <name type="scientific">Gloeothece citriformis (strain PCC 7424)</name>
    <name type="common">Cyanothece sp. (strain PCC 7424)</name>
    <dbReference type="NCBI Taxonomy" id="65393"/>
    <lineage>
        <taxon>Bacteria</taxon>
        <taxon>Bacillati</taxon>
        <taxon>Cyanobacteriota</taxon>
        <taxon>Cyanophyceae</taxon>
        <taxon>Oscillatoriophycideae</taxon>
        <taxon>Chroococcales</taxon>
        <taxon>Aphanothecaceae</taxon>
        <taxon>Gloeothece</taxon>
        <taxon>Gloeothece citriformis</taxon>
    </lineage>
</organism>
<reference key="1">
    <citation type="journal article" date="2011" name="MBio">
        <title>Novel metabolic attributes of the genus Cyanothece, comprising a group of unicellular nitrogen-fixing Cyanobacteria.</title>
        <authorList>
            <person name="Bandyopadhyay A."/>
            <person name="Elvitigala T."/>
            <person name="Welsh E."/>
            <person name="Stockel J."/>
            <person name="Liberton M."/>
            <person name="Min H."/>
            <person name="Sherman L.A."/>
            <person name="Pakrasi H.B."/>
        </authorList>
    </citation>
    <scope>NUCLEOTIDE SEQUENCE [LARGE SCALE GENOMIC DNA]</scope>
    <source>
        <strain>PCC 7424</strain>
    </source>
</reference>
<gene>
    <name evidence="1" type="primary">dnaA</name>
    <name type="ordered locus">PCC7424_0001</name>
</gene>
<protein>
    <recommendedName>
        <fullName evidence="1">Chromosomal replication initiator protein DnaA</fullName>
    </recommendedName>
</protein>
<feature type="chain" id="PRO_1000121969" description="Chromosomal replication initiator protein DnaA">
    <location>
        <begin position="1"/>
        <end position="453"/>
    </location>
</feature>
<feature type="region of interest" description="Domain I, interacts with DnaA modulators" evidence="1">
    <location>
        <begin position="1"/>
        <end position="73"/>
    </location>
</feature>
<feature type="region of interest" description="Domain II" evidence="1">
    <location>
        <begin position="73"/>
        <end position="110"/>
    </location>
</feature>
<feature type="region of interest" description="Domain III, AAA+ region" evidence="1">
    <location>
        <begin position="111"/>
        <end position="327"/>
    </location>
</feature>
<feature type="region of interest" description="Domain IV, binds dsDNA" evidence="1">
    <location>
        <begin position="328"/>
        <end position="453"/>
    </location>
</feature>
<feature type="binding site" evidence="1">
    <location>
        <position position="155"/>
    </location>
    <ligand>
        <name>ATP</name>
        <dbReference type="ChEBI" id="CHEBI:30616"/>
    </ligand>
</feature>
<feature type="binding site" evidence="1">
    <location>
        <position position="157"/>
    </location>
    <ligand>
        <name>ATP</name>
        <dbReference type="ChEBI" id="CHEBI:30616"/>
    </ligand>
</feature>
<feature type="binding site" evidence="1">
    <location>
        <position position="158"/>
    </location>
    <ligand>
        <name>ATP</name>
        <dbReference type="ChEBI" id="CHEBI:30616"/>
    </ligand>
</feature>
<feature type="binding site" evidence="1">
    <location>
        <position position="159"/>
    </location>
    <ligand>
        <name>ATP</name>
        <dbReference type="ChEBI" id="CHEBI:30616"/>
    </ligand>
</feature>
<comment type="function">
    <text evidence="1">Plays an essential role in the initiation and regulation of chromosomal replication. ATP-DnaA binds to the origin of replication (oriC) to initiate formation of the DNA replication initiation complex once per cell cycle. Binds the DnaA box (a 9 base pair repeat at the origin) and separates the double-stranded (ds)DNA. Forms a right-handed helical filament on oriC DNA; dsDNA binds to the exterior of the filament while single-stranded (ss)DNA is stabiized in the filament's interior. The ATP-DnaA-oriC complex binds and stabilizes one strand of the AT-rich DNA unwinding element (DUE), permitting loading of DNA polymerase. After initiation quickly degrades to an ADP-DnaA complex that is not apt for DNA replication. Binds acidic phospholipids.</text>
</comment>
<comment type="subunit">
    <text evidence="1">Oligomerizes as a right-handed, spiral filament on DNA at oriC.</text>
</comment>
<comment type="subcellular location">
    <subcellularLocation>
        <location evidence="1">Cytoplasm</location>
    </subcellularLocation>
</comment>
<comment type="domain">
    <text evidence="1">Domain I is involved in oligomerization and binding regulators, domain II is flexibile and of varying length in different bacteria, domain III forms the AAA+ region, while domain IV binds dsDNA.</text>
</comment>
<comment type="similarity">
    <text evidence="1">Belongs to the DnaA family.</text>
</comment>
<proteinExistence type="inferred from homology"/>
<dbReference type="EMBL" id="CP001291">
    <property type="protein sequence ID" value="ACK68475.1"/>
    <property type="molecule type" value="Genomic_DNA"/>
</dbReference>
<dbReference type="RefSeq" id="WP_012597426.1">
    <property type="nucleotide sequence ID" value="NC_011729.1"/>
</dbReference>
<dbReference type="SMR" id="B7K7Y7"/>
<dbReference type="STRING" id="65393.PCC7424_0001"/>
<dbReference type="KEGG" id="cyc:PCC7424_0001"/>
<dbReference type="eggNOG" id="COG0593">
    <property type="taxonomic scope" value="Bacteria"/>
</dbReference>
<dbReference type="HOGENOM" id="CLU_026910_3_1_3"/>
<dbReference type="OrthoDB" id="9807019at2"/>
<dbReference type="Proteomes" id="UP000002384">
    <property type="component" value="Chromosome"/>
</dbReference>
<dbReference type="GO" id="GO:0005737">
    <property type="term" value="C:cytoplasm"/>
    <property type="evidence" value="ECO:0007669"/>
    <property type="project" value="UniProtKB-SubCell"/>
</dbReference>
<dbReference type="GO" id="GO:0005886">
    <property type="term" value="C:plasma membrane"/>
    <property type="evidence" value="ECO:0007669"/>
    <property type="project" value="TreeGrafter"/>
</dbReference>
<dbReference type="GO" id="GO:0005524">
    <property type="term" value="F:ATP binding"/>
    <property type="evidence" value="ECO:0007669"/>
    <property type="project" value="UniProtKB-UniRule"/>
</dbReference>
<dbReference type="GO" id="GO:0016887">
    <property type="term" value="F:ATP hydrolysis activity"/>
    <property type="evidence" value="ECO:0007669"/>
    <property type="project" value="InterPro"/>
</dbReference>
<dbReference type="GO" id="GO:0003688">
    <property type="term" value="F:DNA replication origin binding"/>
    <property type="evidence" value="ECO:0007669"/>
    <property type="project" value="UniProtKB-UniRule"/>
</dbReference>
<dbReference type="GO" id="GO:0008289">
    <property type="term" value="F:lipid binding"/>
    <property type="evidence" value="ECO:0007669"/>
    <property type="project" value="UniProtKB-KW"/>
</dbReference>
<dbReference type="GO" id="GO:0006270">
    <property type="term" value="P:DNA replication initiation"/>
    <property type="evidence" value="ECO:0007669"/>
    <property type="project" value="UniProtKB-UniRule"/>
</dbReference>
<dbReference type="GO" id="GO:0006275">
    <property type="term" value="P:regulation of DNA replication"/>
    <property type="evidence" value="ECO:0007669"/>
    <property type="project" value="UniProtKB-UniRule"/>
</dbReference>
<dbReference type="CDD" id="cd00009">
    <property type="entry name" value="AAA"/>
    <property type="match status" value="1"/>
</dbReference>
<dbReference type="CDD" id="cd06571">
    <property type="entry name" value="Bac_DnaA_C"/>
    <property type="match status" value="1"/>
</dbReference>
<dbReference type="FunFam" id="3.40.50.300:FF:000150">
    <property type="entry name" value="Chromosomal replication initiator protein DnaA"/>
    <property type="match status" value="1"/>
</dbReference>
<dbReference type="Gene3D" id="1.10.1750.10">
    <property type="match status" value="1"/>
</dbReference>
<dbReference type="Gene3D" id="1.10.8.60">
    <property type="match status" value="1"/>
</dbReference>
<dbReference type="Gene3D" id="3.30.300.180">
    <property type="match status" value="1"/>
</dbReference>
<dbReference type="Gene3D" id="3.40.50.300">
    <property type="entry name" value="P-loop containing nucleotide triphosphate hydrolases"/>
    <property type="match status" value="1"/>
</dbReference>
<dbReference type="HAMAP" id="MF_00377">
    <property type="entry name" value="DnaA_bact"/>
    <property type="match status" value="1"/>
</dbReference>
<dbReference type="InterPro" id="IPR003593">
    <property type="entry name" value="AAA+_ATPase"/>
</dbReference>
<dbReference type="InterPro" id="IPR001957">
    <property type="entry name" value="Chromosome_initiator_DnaA"/>
</dbReference>
<dbReference type="InterPro" id="IPR020591">
    <property type="entry name" value="Chromosome_initiator_DnaA-like"/>
</dbReference>
<dbReference type="InterPro" id="IPR018312">
    <property type="entry name" value="Chromosome_initiator_DnaA_CS"/>
</dbReference>
<dbReference type="InterPro" id="IPR013159">
    <property type="entry name" value="DnaA_C"/>
</dbReference>
<dbReference type="InterPro" id="IPR013317">
    <property type="entry name" value="DnaA_dom"/>
</dbReference>
<dbReference type="InterPro" id="IPR024633">
    <property type="entry name" value="DnaA_N_dom"/>
</dbReference>
<dbReference type="InterPro" id="IPR038454">
    <property type="entry name" value="DnaA_N_sf"/>
</dbReference>
<dbReference type="InterPro" id="IPR027417">
    <property type="entry name" value="P-loop_NTPase"/>
</dbReference>
<dbReference type="InterPro" id="IPR010921">
    <property type="entry name" value="Trp_repressor/repl_initiator"/>
</dbReference>
<dbReference type="NCBIfam" id="TIGR00362">
    <property type="entry name" value="DnaA"/>
    <property type="match status" value="1"/>
</dbReference>
<dbReference type="PANTHER" id="PTHR30050">
    <property type="entry name" value="CHROMOSOMAL REPLICATION INITIATOR PROTEIN DNAA"/>
    <property type="match status" value="1"/>
</dbReference>
<dbReference type="PANTHER" id="PTHR30050:SF2">
    <property type="entry name" value="CHROMOSOMAL REPLICATION INITIATOR PROTEIN DNAA"/>
    <property type="match status" value="1"/>
</dbReference>
<dbReference type="Pfam" id="PF00308">
    <property type="entry name" value="Bac_DnaA"/>
    <property type="match status" value="1"/>
</dbReference>
<dbReference type="Pfam" id="PF08299">
    <property type="entry name" value="Bac_DnaA_C"/>
    <property type="match status" value="1"/>
</dbReference>
<dbReference type="Pfam" id="PF11638">
    <property type="entry name" value="DnaA_N"/>
    <property type="match status" value="1"/>
</dbReference>
<dbReference type="PRINTS" id="PR00051">
    <property type="entry name" value="DNAA"/>
</dbReference>
<dbReference type="SMART" id="SM00382">
    <property type="entry name" value="AAA"/>
    <property type="match status" value="1"/>
</dbReference>
<dbReference type="SMART" id="SM00760">
    <property type="entry name" value="Bac_DnaA_C"/>
    <property type="match status" value="1"/>
</dbReference>
<dbReference type="SUPFAM" id="SSF52540">
    <property type="entry name" value="P-loop containing nucleoside triphosphate hydrolases"/>
    <property type="match status" value="1"/>
</dbReference>
<dbReference type="SUPFAM" id="SSF48295">
    <property type="entry name" value="TrpR-like"/>
    <property type="match status" value="1"/>
</dbReference>
<dbReference type="PROSITE" id="PS01008">
    <property type="entry name" value="DNAA"/>
    <property type="match status" value="1"/>
</dbReference>
<sequence length="453" mass="51543">MELSPQDLWTQVLERLQSRLPRPAFDTWIGTAKIEQLTPQYLVICAANPFILNHLQKNYLQIIADVVEEILGYSIDIQLTSTQGENIAIVGETQVSAYYPTLSGEHPKPIKLNPKYTFSRFVVGSNNRLAHAATLAVAESPGREFNPLFLCGGVGLGKTHLMQAIAHYRLQMYPDSKVFYVSTEQFTNDLITAIRQDSLQSFREHYRTADILLVDDIQFIEGKEYTQEEFFHTFNTLHEAGKQVVIASDRPPKQIPTLEDRLISRFSMGLIADIQVPDLETRMAILQKKAEYENMRLPREVIEYIATHYTSNIRELEGALIRAITYISISGLSMTVENLAPVLNPPVERGEVTPELILNIIAETYKVSVEDLKGNSRRREISLARQIGMYLMRQHTDLSLPRIGEEFGGKDHTTVMYSYDKINQLQKKDLDLSQTLSQLSDRIHLASRTQKTT</sequence>
<evidence type="ECO:0000255" key="1">
    <source>
        <dbReference type="HAMAP-Rule" id="MF_00377"/>
    </source>
</evidence>
<name>DNAA_GLOC7</name>
<accession>B7K7Y7</accession>